<protein>
    <recommendedName>
        <fullName evidence="4">Small ribosomal subunit protein uS11A</fullName>
    </recommendedName>
    <alternativeName>
        <fullName>40S ribosomal protein S14a</fullName>
    </alternativeName>
</protein>
<organism>
    <name type="scientific">Anopheles gambiae</name>
    <name type="common">African malaria mosquito</name>
    <dbReference type="NCBI Taxonomy" id="7165"/>
    <lineage>
        <taxon>Eukaryota</taxon>
        <taxon>Metazoa</taxon>
        <taxon>Ecdysozoa</taxon>
        <taxon>Arthropoda</taxon>
        <taxon>Hexapoda</taxon>
        <taxon>Insecta</taxon>
        <taxon>Pterygota</taxon>
        <taxon>Neoptera</taxon>
        <taxon>Endopterygota</taxon>
        <taxon>Diptera</taxon>
        <taxon>Nematocera</taxon>
        <taxon>Culicoidea</taxon>
        <taxon>Culicidae</taxon>
        <taxon>Anophelinae</taxon>
        <taxon>Anopheles</taxon>
    </lineage>
</organism>
<reference evidence="5" key="1">
    <citation type="journal article" date="2002" name="Science">
        <title>The genome sequence of the malaria mosquito Anopheles gambiae.</title>
        <authorList>
            <person name="Holt R.A."/>
            <person name="Subramanian G.M."/>
            <person name="Halpern A."/>
            <person name="Sutton G.G."/>
            <person name="Charlab R."/>
            <person name="Nusskern D.R."/>
            <person name="Wincker P."/>
            <person name="Clark A.G."/>
            <person name="Ribeiro J.M.C."/>
            <person name="Wides R."/>
            <person name="Salzberg S.L."/>
            <person name="Loftus B.J."/>
            <person name="Yandell M.D."/>
            <person name="Majoros W.H."/>
            <person name="Rusch D.B."/>
            <person name="Lai Z."/>
            <person name="Kraft C.L."/>
            <person name="Abril J.F."/>
            <person name="Anthouard V."/>
            <person name="Arensburger P."/>
            <person name="Atkinson P.W."/>
            <person name="Baden H."/>
            <person name="de Berardinis V."/>
            <person name="Baldwin D."/>
            <person name="Benes V."/>
            <person name="Biedler J."/>
            <person name="Blass C."/>
            <person name="Bolanos R."/>
            <person name="Boscus D."/>
            <person name="Barnstead M."/>
            <person name="Cai S."/>
            <person name="Center A."/>
            <person name="Chaturverdi K."/>
            <person name="Christophides G.K."/>
            <person name="Chrystal M.A.M."/>
            <person name="Clamp M."/>
            <person name="Cravchik A."/>
            <person name="Curwen V."/>
            <person name="Dana A."/>
            <person name="Delcher A."/>
            <person name="Dew I."/>
            <person name="Evans C.A."/>
            <person name="Flanigan M."/>
            <person name="Grundschober-Freimoser A."/>
            <person name="Friedli L."/>
            <person name="Gu Z."/>
            <person name="Guan P."/>
            <person name="Guigo R."/>
            <person name="Hillenmeyer M.E."/>
            <person name="Hladun S.L."/>
            <person name="Hogan J.R."/>
            <person name="Hong Y.S."/>
            <person name="Hoover J."/>
            <person name="Jaillon O."/>
            <person name="Ke Z."/>
            <person name="Kodira C.D."/>
            <person name="Kokoza E."/>
            <person name="Koutsos A."/>
            <person name="Letunic I."/>
            <person name="Levitsky A.A."/>
            <person name="Liang Y."/>
            <person name="Lin J.-J."/>
            <person name="Lobo N.F."/>
            <person name="Lopez J.R."/>
            <person name="Malek J.A."/>
            <person name="McIntosh T.C."/>
            <person name="Meister S."/>
            <person name="Miller J.R."/>
            <person name="Mobarry C."/>
            <person name="Mongin E."/>
            <person name="Murphy S.D."/>
            <person name="O'Brochta D.A."/>
            <person name="Pfannkoch C."/>
            <person name="Qi R."/>
            <person name="Regier M.A."/>
            <person name="Remington K."/>
            <person name="Shao H."/>
            <person name="Sharakhova M.V."/>
            <person name="Sitter C.D."/>
            <person name="Shetty J."/>
            <person name="Smith T.J."/>
            <person name="Strong R."/>
            <person name="Sun J."/>
            <person name="Thomasova D."/>
            <person name="Ton L.Q."/>
            <person name="Topalis P."/>
            <person name="Tu Z.J."/>
            <person name="Unger M.F."/>
            <person name="Walenz B."/>
            <person name="Wang A.H."/>
            <person name="Wang J."/>
            <person name="Wang M."/>
            <person name="Wang X."/>
            <person name="Woodford K.J."/>
            <person name="Wortman J.R."/>
            <person name="Wu M."/>
            <person name="Yao A."/>
            <person name="Zdobnov E.M."/>
            <person name="Zhang H."/>
            <person name="Zhao Q."/>
            <person name="Zhao S."/>
            <person name="Zhu S.C."/>
            <person name="Zhimulev I."/>
            <person name="Coluzzi M."/>
            <person name="della Torre A."/>
            <person name="Roth C.W."/>
            <person name="Louis C."/>
            <person name="Kalush F."/>
            <person name="Mural R.J."/>
            <person name="Myers E.W."/>
            <person name="Adams M.D."/>
            <person name="Smith H.O."/>
            <person name="Broder S."/>
            <person name="Gardner M.J."/>
            <person name="Fraser C.M."/>
            <person name="Birney E."/>
            <person name="Bork P."/>
            <person name="Brey P.T."/>
            <person name="Venter J.C."/>
            <person name="Weissenbach J."/>
            <person name="Kafatos F.C."/>
            <person name="Collins F.H."/>
            <person name="Hoffman S.L."/>
        </authorList>
    </citation>
    <scope>NUCLEOTIDE SEQUENCE [LARGE SCALE GENOMIC DNA]</scope>
    <source>
        <strain>PEST</strain>
    </source>
</reference>
<feature type="chain" id="PRO_0000372797" description="Small ribosomal subunit protein uS11A">
    <location>
        <begin position="1"/>
        <end position="152"/>
    </location>
</feature>
<feature type="region of interest" description="Disordered" evidence="3">
    <location>
        <begin position="131"/>
        <end position="152"/>
    </location>
</feature>
<feature type="compositionally biased region" description="Basic residues" evidence="3">
    <location>
        <begin position="143"/>
        <end position="152"/>
    </location>
</feature>
<sequence length="152" mass="16313">MAPSRKNKVVKEEVQVSLGPQVRDGEVVFGVAHIYASFNDTFVHVTDLSGKETISRVTGGMKVKADRDEASPYAAMLAAQDVAEKCKSLGITALHIKLRATGGNRTKTPGPGAQSALRALARSSMKIGRIEDVTPIPSDSTRRKGGRRGRRL</sequence>
<evidence type="ECO:0000250" key="1">
    <source>
        <dbReference type="UniProtKB" id="P14130"/>
    </source>
</evidence>
<evidence type="ECO:0000255" key="2"/>
<evidence type="ECO:0000256" key="3">
    <source>
        <dbReference type="SAM" id="MobiDB-lite"/>
    </source>
</evidence>
<evidence type="ECO:0000305" key="4"/>
<evidence type="ECO:0000312" key="5">
    <source>
        <dbReference type="EMBL" id="EAA06897.2"/>
    </source>
</evidence>
<dbReference type="EMBL" id="AAAB01008847">
    <property type="protein sequence ID" value="EAA06897.2"/>
    <property type="molecule type" value="Genomic_DNA"/>
</dbReference>
<dbReference type="SMR" id="Q7QEH1"/>
<dbReference type="FunCoup" id="Q7QEH1">
    <property type="interactions" value="1346"/>
</dbReference>
<dbReference type="STRING" id="7165.Q7QEH1"/>
<dbReference type="PaxDb" id="7165-AGAP000655-PA"/>
<dbReference type="EnsemblMetazoa" id="AGAP000655-RA">
    <property type="protein sequence ID" value="AGAP000655-PA"/>
    <property type="gene ID" value="AGAP000655"/>
</dbReference>
<dbReference type="GeneID" id="1272446"/>
<dbReference type="KEGG" id="aga:1272446"/>
<dbReference type="VEuPathDB" id="VectorBase:AGAMI1_002152"/>
<dbReference type="VEuPathDB" id="VectorBase:AGAP000655"/>
<dbReference type="eggNOG" id="KOG0407">
    <property type="taxonomic scope" value="Eukaryota"/>
</dbReference>
<dbReference type="HOGENOM" id="CLU_072439_6_0_1"/>
<dbReference type="InParanoid" id="Q7QEH1"/>
<dbReference type="OMA" id="IYASHND"/>
<dbReference type="OrthoDB" id="1677536at2759"/>
<dbReference type="PhylomeDB" id="Q7QEH1"/>
<dbReference type="Proteomes" id="UP000007062">
    <property type="component" value="Chromosome X"/>
</dbReference>
<dbReference type="GO" id="GO:0022627">
    <property type="term" value="C:cytosolic small ribosomal subunit"/>
    <property type="evidence" value="ECO:0000318"/>
    <property type="project" value="GO_Central"/>
</dbReference>
<dbReference type="GO" id="GO:0003735">
    <property type="term" value="F:structural constituent of ribosome"/>
    <property type="evidence" value="ECO:0000318"/>
    <property type="project" value="GO_Central"/>
</dbReference>
<dbReference type="GO" id="GO:0000028">
    <property type="term" value="P:ribosomal small subunit assembly"/>
    <property type="evidence" value="ECO:0000318"/>
    <property type="project" value="GO_Central"/>
</dbReference>
<dbReference type="GO" id="GO:0006412">
    <property type="term" value="P:translation"/>
    <property type="evidence" value="ECO:0000318"/>
    <property type="project" value="GO_Central"/>
</dbReference>
<dbReference type="FunFam" id="3.30.420.80:FF:000002">
    <property type="entry name" value="40S ribosomal protein S14"/>
    <property type="match status" value="1"/>
</dbReference>
<dbReference type="Gene3D" id="3.30.420.80">
    <property type="entry name" value="Ribosomal protein S11"/>
    <property type="match status" value="1"/>
</dbReference>
<dbReference type="HAMAP" id="MF_01310">
    <property type="entry name" value="Ribosomal_uS11"/>
    <property type="match status" value="1"/>
</dbReference>
<dbReference type="InterPro" id="IPR001971">
    <property type="entry name" value="Ribosomal_uS11"/>
</dbReference>
<dbReference type="InterPro" id="IPR018102">
    <property type="entry name" value="Ribosomal_uS11_CS"/>
</dbReference>
<dbReference type="InterPro" id="IPR036967">
    <property type="entry name" value="Ribosomal_uS11_sf"/>
</dbReference>
<dbReference type="NCBIfam" id="NF007176">
    <property type="entry name" value="PRK09607.1"/>
    <property type="match status" value="1"/>
</dbReference>
<dbReference type="PANTHER" id="PTHR11759">
    <property type="entry name" value="40S RIBOSOMAL PROTEIN S14/30S RIBOSOMAL PROTEIN S11"/>
    <property type="match status" value="1"/>
</dbReference>
<dbReference type="Pfam" id="PF00411">
    <property type="entry name" value="Ribosomal_S11"/>
    <property type="match status" value="1"/>
</dbReference>
<dbReference type="PIRSF" id="PIRSF002131">
    <property type="entry name" value="Ribosomal_S11"/>
    <property type="match status" value="1"/>
</dbReference>
<dbReference type="SUPFAM" id="SSF53137">
    <property type="entry name" value="Translational machinery components"/>
    <property type="match status" value="1"/>
</dbReference>
<dbReference type="PROSITE" id="PS00054">
    <property type="entry name" value="RIBOSOMAL_S11"/>
    <property type="match status" value="1"/>
</dbReference>
<comment type="similarity">
    <text evidence="2">Belongs to the universal ribosomal protein uS11 family.</text>
</comment>
<proteinExistence type="inferred from homology"/>
<accession>Q7QEH1</accession>
<keyword id="KW-1185">Reference proteome</keyword>
<keyword id="KW-0687">Ribonucleoprotein</keyword>
<keyword id="KW-0689">Ribosomal protein</keyword>
<name>RS14A_ANOGA</name>
<gene>
    <name evidence="1" type="primary">RpS14a</name>
    <name type="ORF">AGAP000655</name>
</gene>